<reference key="1">
    <citation type="submission" date="2000-11" db="EMBL/GenBank/DDBJ databases">
        <title>L. bulgaricus ymdA-uvrA region.</title>
        <authorList>
            <person name="van de Guchte M."/>
            <person name="Dervyn R."/>
            <person name="Ehrlich S.D."/>
            <person name="Maguin E."/>
        </authorList>
    </citation>
    <scope>NUCLEOTIDE SEQUENCE [GENOMIC DNA]</scope>
</reference>
<reference key="2">
    <citation type="journal article" date="2006" name="Proc. Natl. Acad. Sci. U.S.A.">
        <title>The complete genome sequence of Lactobacillus bulgaricus reveals extensive and ongoing reductive evolution.</title>
        <authorList>
            <person name="van de Guchte M."/>
            <person name="Penaud S."/>
            <person name="Grimaldi C."/>
            <person name="Barbe V."/>
            <person name="Bryson K."/>
            <person name="Nicolas P."/>
            <person name="Robert C."/>
            <person name="Oztas S."/>
            <person name="Mangenot S."/>
            <person name="Couloux A."/>
            <person name="Loux V."/>
            <person name="Dervyn R."/>
            <person name="Bossy R."/>
            <person name="Bolotin A."/>
            <person name="Batto J.-M."/>
            <person name="Walunas T."/>
            <person name="Gibrat J.-F."/>
            <person name="Bessieres P."/>
            <person name="Weissenbach J."/>
            <person name="Ehrlich S.D."/>
            <person name="Maguin E."/>
        </authorList>
    </citation>
    <scope>NUCLEOTIDE SEQUENCE [LARGE SCALE GENOMIC DNA]</scope>
    <source>
        <strain>ATCC 11842 / DSM 20081 / BCRC 10696 / JCM 1002 / NBRC 13953 / NCIMB 11778 / NCTC 12712 / WDCM 00102 / Lb 14</strain>
    </source>
</reference>
<evidence type="ECO:0000255" key="1">
    <source>
        <dbReference type="HAMAP-Rule" id="MF_01249"/>
    </source>
</evidence>
<evidence type="ECO:0000305" key="2"/>
<organism>
    <name type="scientific">Lactobacillus delbrueckii subsp. bulgaricus (strain ATCC 11842 / DSM 20081 / BCRC 10696 / JCM 1002 / NBRC 13953 / NCIMB 11778 / NCTC 12712 / WDCM 00102 / Lb 14)</name>
    <dbReference type="NCBI Taxonomy" id="390333"/>
    <lineage>
        <taxon>Bacteria</taxon>
        <taxon>Bacillati</taxon>
        <taxon>Bacillota</taxon>
        <taxon>Bacilli</taxon>
        <taxon>Lactobacillales</taxon>
        <taxon>Lactobacillaceae</taxon>
        <taxon>Lactobacillus</taxon>
    </lineage>
</organism>
<protein>
    <recommendedName>
        <fullName evidence="1">HPr kinase/phosphorylase</fullName>
        <shortName evidence="1">HPrK/P</shortName>
        <ecNumber evidence="1">2.7.11.-</ecNumber>
        <ecNumber evidence="1">2.7.4.-</ecNumber>
    </recommendedName>
    <alternativeName>
        <fullName evidence="1">HPr(Ser) kinase/phosphorylase</fullName>
    </alternativeName>
</protein>
<dbReference type="EC" id="2.7.11.-" evidence="1"/>
<dbReference type="EC" id="2.7.4.-" evidence="1"/>
<dbReference type="EMBL" id="AF320250">
    <property type="protein sequence ID" value="AAL14784.1"/>
    <property type="molecule type" value="Genomic_DNA"/>
</dbReference>
<dbReference type="EMBL" id="CR954253">
    <property type="protein sequence ID" value="CAI97440.1"/>
    <property type="status" value="ALT_INIT"/>
    <property type="molecule type" value="Genomic_DNA"/>
</dbReference>
<dbReference type="RefSeq" id="WP_041806760.1">
    <property type="nucleotide sequence ID" value="NC_008054.1"/>
</dbReference>
<dbReference type="SMR" id="Q93FD2"/>
<dbReference type="STRING" id="390333.Ldb0610"/>
<dbReference type="KEGG" id="ldb:Ldb0610"/>
<dbReference type="PATRIC" id="fig|390333.13.peg.187"/>
<dbReference type="eggNOG" id="COG1493">
    <property type="taxonomic scope" value="Bacteria"/>
</dbReference>
<dbReference type="HOGENOM" id="CLU_052030_0_1_9"/>
<dbReference type="BioCyc" id="LDEL390333:LDB_RS02640-MONOMER"/>
<dbReference type="Proteomes" id="UP000001259">
    <property type="component" value="Chromosome"/>
</dbReference>
<dbReference type="GO" id="GO:0005524">
    <property type="term" value="F:ATP binding"/>
    <property type="evidence" value="ECO:0007669"/>
    <property type="project" value="UniProtKB-UniRule"/>
</dbReference>
<dbReference type="GO" id="GO:0000287">
    <property type="term" value="F:magnesium ion binding"/>
    <property type="evidence" value="ECO:0007669"/>
    <property type="project" value="UniProtKB-UniRule"/>
</dbReference>
<dbReference type="GO" id="GO:0000155">
    <property type="term" value="F:phosphorelay sensor kinase activity"/>
    <property type="evidence" value="ECO:0007669"/>
    <property type="project" value="InterPro"/>
</dbReference>
<dbReference type="GO" id="GO:0004674">
    <property type="term" value="F:protein serine/threonine kinase activity"/>
    <property type="evidence" value="ECO:0007669"/>
    <property type="project" value="UniProtKB-KW"/>
</dbReference>
<dbReference type="GO" id="GO:0004712">
    <property type="term" value="F:protein serine/threonine/tyrosine kinase activity"/>
    <property type="evidence" value="ECO:0007669"/>
    <property type="project" value="UniProtKB-UniRule"/>
</dbReference>
<dbReference type="GO" id="GO:0006109">
    <property type="term" value="P:regulation of carbohydrate metabolic process"/>
    <property type="evidence" value="ECO:0007669"/>
    <property type="project" value="UniProtKB-UniRule"/>
</dbReference>
<dbReference type="CDD" id="cd01918">
    <property type="entry name" value="HprK_C"/>
    <property type="match status" value="1"/>
</dbReference>
<dbReference type="FunFam" id="3.40.50.300:FF:000174">
    <property type="entry name" value="HPr kinase/phosphorylase"/>
    <property type="match status" value="1"/>
</dbReference>
<dbReference type="Gene3D" id="3.40.1390.20">
    <property type="entry name" value="HprK N-terminal domain-like"/>
    <property type="match status" value="1"/>
</dbReference>
<dbReference type="Gene3D" id="3.40.50.300">
    <property type="entry name" value="P-loop containing nucleotide triphosphate hydrolases"/>
    <property type="match status" value="1"/>
</dbReference>
<dbReference type="HAMAP" id="MF_01249">
    <property type="entry name" value="HPr_kinase"/>
    <property type="match status" value="1"/>
</dbReference>
<dbReference type="InterPro" id="IPR003755">
    <property type="entry name" value="HPr(Ser)_kin/Pase"/>
</dbReference>
<dbReference type="InterPro" id="IPR011104">
    <property type="entry name" value="Hpr_kin/Pase_C"/>
</dbReference>
<dbReference type="InterPro" id="IPR011126">
    <property type="entry name" value="Hpr_kin/Pase_Hpr_N"/>
</dbReference>
<dbReference type="InterPro" id="IPR027417">
    <property type="entry name" value="P-loop_NTPase"/>
</dbReference>
<dbReference type="InterPro" id="IPR028979">
    <property type="entry name" value="Ser_kin/Pase_Hpr-like_N_sf"/>
</dbReference>
<dbReference type="NCBIfam" id="TIGR00679">
    <property type="entry name" value="hpr-ser"/>
    <property type="match status" value="1"/>
</dbReference>
<dbReference type="PANTHER" id="PTHR30305:SF1">
    <property type="entry name" value="HPR KINASE_PHOSPHORYLASE"/>
    <property type="match status" value="1"/>
</dbReference>
<dbReference type="PANTHER" id="PTHR30305">
    <property type="entry name" value="PROTEIN YJDM-RELATED"/>
    <property type="match status" value="1"/>
</dbReference>
<dbReference type="Pfam" id="PF07475">
    <property type="entry name" value="Hpr_kinase_C"/>
    <property type="match status" value="1"/>
</dbReference>
<dbReference type="Pfam" id="PF02603">
    <property type="entry name" value="Hpr_kinase_N"/>
    <property type="match status" value="1"/>
</dbReference>
<dbReference type="SUPFAM" id="SSF75138">
    <property type="entry name" value="HprK N-terminal domain-like"/>
    <property type="match status" value="1"/>
</dbReference>
<dbReference type="SUPFAM" id="SSF53795">
    <property type="entry name" value="PEP carboxykinase-like"/>
    <property type="match status" value="1"/>
</dbReference>
<proteinExistence type="inferred from homology"/>
<keyword id="KW-0067">ATP-binding</keyword>
<keyword id="KW-0119">Carbohydrate metabolism</keyword>
<keyword id="KW-0418">Kinase</keyword>
<keyword id="KW-0460">Magnesium</keyword>
<keyword id="KW-0479">Metal-binding</keyword>
<keyword id="KW-0511">Multifunctional enzyme</keyword>
<keyword id="KW-0547">Nucleotide-binding</keyword>
<keyword id="KW-1185">Reference proteome</keyword>
<keyword id="KW-0723">Serine/threonine-protein kinase</keyword>
<keyword id="KW-0808">Transferase</keyword>
<accession>Q93FD2</accession>
<accession>Q1GB42</accession>
<feature type="chain" id="PRO_0000058960" description="HPr kinase/phosphorylase">
    <location>
        <begin position="1"/>
        <end position="316"/>
    </location>
</feature>
<feature type="region of interest" description="Important for the catalytic mechanism of both phosphorylation and dephosphorylation" evidence="1">
    <location>
        <begin position="204"/>
        <end position="213"/>
    </location>
</feature>
<feature type="region of interest" description="Important for the catalytic mechanism of dephosphorylation" evidence="1">
    <location>
        <begin position="267"/>
        <end position="272"/>
    </location>
</feature>
<feature type="active site" evidence="1">
    <location>
        <position position="141"/>
    </location>
</feature>
<feature type="active site" evidence="1">
    <location>
        <position position="162"/>
    </location>
</feature>
<feature type="active site" description="Proton acceptor; for phosphorylation activity. Proton donor; for dephosphorylation activity" evidence="1">
    <location>
        <position position="180"/>
    </location>
</feature>
<feature type="active site" evidence="1">
    <location>
        <position position="246"/>
    </location>
</feature>
<feature type="binding site" evidence="1">
    <location>
        <begin position="156"/>
        <end position="163"/>
    </location>
    <ligand>
        <name>ATP</name>
        <dbReference type="ChEBI" id="CHEBI:30616"/>
    </ligand>
</feature>
<feature type="binding site" evidence="1">
    <location>
        <position position="163"/>
    </location>
    <ligand>
        <name>Mg(2+)</name>
        <dbReference type="ChEBI" id="CHEBI:18420"/>
    </ligand>
</feature>
<feature type="binding site" evidence="1">
    <location>
        <position position="205"/>
    </location>
    <ligand>
        <name>Mg(2+)</name>
        <dbReference type="ChEBI" id="CHEBI:18420"/>
    </ligand>
</feature>
<name>HPRK_LACDA</name>
<gene>
    <name evidence="1" type="primary">hprK</name>
    <name type="ordered locus">Ldb0610</name>
</gene>
<sequence length="316" mass="35012">MTNTVKLTEFINDNSNLRVLQGQECVAGKEITVSDVYRPGLELSGYFDFYPADRVQLLGRTEISYAARLDHDLRRKVFEKICQKETPCLLVSRNLPVPVELKEAAEAAGTPILISNDATTYLMSMITQYLAVKLAERSSVHGVLVEVFGMGVLLTGESGVGKSETALALVQHGHRLIADDRVDVYQRDHETVVGEAPRILKHLMEIRGIGIIDVLKLFGIGAIKDETEISLVINLTNWDSKANYDRLGFQENTRIICGIAVTQVTIPVKVGRNMENIVEVAVMNFRAKAMGFDAAKTFDENLTSLIAENSEEEKRG</sequence>
<comment type="function">
    <text evidence="1">Catalyzes the ATP- as well as the pyrophosphate-dependent phosphorylation of a specific serine residue in HPr, a phosphocarrier protein of the phosphoenolpyruvate-dependent sugar phosphotransferase system (PTS). HprK/P also catalyzes the pyrophosphate-producing, inorganic phosphate-dependent dephosphorylation (phosphorolysis) of seryl-phosphorylated HPr (P-Ser-HPr). The two antagonistic activities of HprK/P are regulated by several intracellular metabolites, which change their concentration in response to the absence or presence of rapidly metabolisable carbon sources (glucose, fructose, etc.) in the growth medium. Therefore, by controlling the phosphorylation state of HPr, HPrK/P is a sensor enzyme that plays a major role in the regulation of carbon metabolism and sugar transport: it mediates carbon catabolite repression (CCR), and regulates PTS-catalyzed carbohydrate uptake and inducer exclusion.</text>
</comment>
<comment type="catalytic activity">
    <reaction evidence="1">
        <text>[HPr protein]-L-serine + ATP = [HPr protein]-O-phospho-L-serine + ADP + H(+)</text>
        <dbReference type="Rhea" id="RHEA:46600"/>
        <dbReference type="Rhea" id="RHEA-COMP:11602"/>
        <dbReference type="Rhea" id="RHEA-COMP:11603"/>
        <dbReference type="ChEBI" id="CHEBI:15378"/>
        <dbReference type="ChEBI" id="CHEBI:29999"/>
        <dbReference type="ChEBI" id="CHEBI:30616"/>
        <dbReference type="ChEBI" id="CHEBI:83421"/>
        <dbReference type="ChEBI" id="CHEBI:456216"/>
    </reaction>
</comment>
<comment type="catalytic activity">
    <reaction evidence="1">
        <text>[HPr protein]-O-phospho-L-serine + phosphate + H(+) = [HPr protein]-L-serine + diphosphate</text>
        <dbReference type="Rhea" id="RHEA:46604"/>
        <dbReference type="Rhea" id="RHEA-COMP:11602"/>
        <dbReference type="Rhea" id="RHEA-COMP:11603"/>
        <dbReference type="ChEBI" id="CHEBI:15378"/>
        <dbReference type="ChEBI" id="CHEBI:29999"/>
        <dbReference type="ChEBI" id="CHEBI:33019"/>
        <dbReference type="ChEBI" id="CHEBI:43474"/>
        <dbReference type="ChEBI" id="CHEBI:83421"/>
    </reaction>
</comment>
<comment type="cofactor">
    <cofactor evidence="1">
        <name>Mg(2+)</name>
        <dbReference type="ChEBI" id="CHEBI:18420"/>
    </cofactor>
</comment>
<comment type="subunit">
    <text evidence="1">Homohexamer.</text>
</comment>
<comment type="domain">
    <text evidence="1">The Walker A ATP-binding motif also binds Pi and PPi.</text>
</comment>
<comment type="miscellaneous">
    <text evidence="1">Both phosphorylation and phosphorolysis are carried out by the same active site and suggest a common mechanism for both reactions.</text>
</comment>
<comment type="similarity">
    <text evidence="1">Belongs to the HPrK/P family.</text>
</comment>
<comment type="sequence caution" evidence="2">
    <conflict type="erroneous initiation">
        <sequence resource="EMBL-CDS" id="CAI97440"/>
    </conflict>
</comment>